<feature type="chain" id="PRO_1000093898" description="Holo-[acyl-carrier-protein] synthase">
    <location>
        <begin position="1"/>
        <end position="125"/>
    </location>
</feature>
<feature type="binding site" evidence="1">
    <location>
        <position position="8"/>
    </location>
    <ligand>
        <name>Mg(2+)</name>
        <dbReference type="ChEBI" id="CHEBI:18420"/>
    </ligand>
</feature>
<feature type="binding site" evidence="1">
    <location>
        <position position="57"/>
    </location>
    <ligand>
        <name>Mg(2+)</name>
        <dbReference type="ChEBI" id="CHEBI:18420"/>
    </ligand>
</feature>
<comment type="function">
    <text evidence="1">Transfers the 4'-phosphopantetheine moiety from coenzyme A to a Ser of acyl-carrier-protein.</text>
</comment>
<comment type="catalytic activity">
    <reaction evidence="1">
        <text>apo-[ACP] + CoA = holo-[ACP] + adenosine 3',5'-bisphosphate + H(+)</text>
        <dbReference type="Rhea" id="RHEA:12068"/>
        <dbReference type="Rhea" id="RHEA-COMP:9685"/>
        <dbReference type="Rhea" id="RHEA-COMP:9690"/>
        <dbReference type="ChEBI" id="CHEBI:15378"/>
        <dbReference type="ChEBI" id="CHEBI:29999"/>
        <dbReference type="ChEBI" id="CHEBI:57287"/>
        <dbReference type="ChEBI" id="CHEBI:58343"/>
        <dbReference type="ChEBI" id="CHEBI:64479"/>
        <dbReference type="EC" id="2.7.8.7"/>
    </reaction>
</comment>
<comment type="cofactor">
    <cofactor evidence="1">
        <name>Mg(2+)</name>
        <dbReference type="ChEBI" id="CHEBI:18420"/>
    </cofactor>
</comment>
<comment type="subcellular location">
    <subcellularLocation>
        <location evidence="1">Cytoplasm</location>
    </subcellularLocation>
</comment>
<comment type="similarity">
    <text evidence="1">Belongs to the P-Pant transferase superfamily. AcpS family.</text>
</comment>
<dbReference type="EC" id="2.7.8.7" evidence="1"/>
<dbReference type="EMBL" id="CP001034">
    <property type="protein sequence ID" value="ACB83898.1"/>
    <property type="molecule type" value="Genomic_DNA"/>
</dbReference>
<dbReference type="RefSeq" id="WP_012446786.1">
    <property type="nucleotide sequence ID" value="NC_010718.1"/>
</dbReference>
<dbReference type="SMR" id="B2A4X6"/>
<dbReference type="FunCoup" id="B2A4X6">
    <property type="interactions" value="103"/>
</dbReference>
<dbReference type="STRING" id="457570.Nther_0300"/>
<dbReference type="KEGG" id="nth:Nther_0300"/>
<dbReference type="eggNOG" id="COG0736">
    <property type="taxonomic scope" value="Bacteria"/>
</dbReference>
<dbReference type="HOGENOM" id="CLU_089696_0_2_9"/>
<dbReference type="InParanoid" id="B2A4X6"/>
<dbReference type="OrthoDB" id="517356at2"/>
<dbReference type="Proteomes" id="UP000001683">
    <property type="component" value="Chromosome"/>
</dbReference>
<dbReference type="GO" id="GO:0005737">
    <property type="term" value="C:cytoplasm"/>
    <property type="evidence" value="ECO:0007669"/>
    <property type="project" value="UniProtKB-SubCell"/>
</dbReference>
<dbReference type="GO" id="GO:0008897">
    <property type="term" value="F:holo-[acyl-carrier-protein] synthase activity"/>
    <property type="evidence" value="ECO:0007669"/>
    <property type="project" value="UniProtKB-UniRule"/>
</dbReference>
<dbReference type="GO" id="GO:0000287">
    <property type="term" value="F:magnesium ion binding"/>
    <property type="evidence" value="ECO:0007669"/>
    <property type="project" value="UniProtKB-UniRule"/>
</dbReference>
<dbReference type="GO" id="GO:0006633">
    <property type="term" value="P:fatty acid biosynthetic process"/>
    <property type="evidence" value="ECO:0007669"/>
    <property type="project" value="UniProtKB-UniRule"/>
</dbReference>
<dbReference type="Gene3D" id="3.90.470.20">
    <property type="entry name" value="4'-phosphopantetheinyl transferase domain"/>
    <property type="match status" value="1"/>
</dbReference>
<dbReference type="HAMAP" id="MF_00101">
    <property type="entry name" value="AcpS"/>
    <property type="match status" value="1"/>
</dbReference>
<dbReference type="InterPro" id="IPR008278">
    <property type="entry name" value="4-PPantetheinyl_Trfase_dom"/>
</dbReference>
<dbReference type="InterPro" id="IPR037143">
    <property type="entry name" value="4-PPantetheinyl_Trfase_dom_sf"/>
</dbReference>
<dbReference type="InterPro" id="IPR002582">
    <property type="entry name" value="ACPS"/>
</dbReference>
<dbReference type="InterPro" id="IPR004568">
    <property type="entry name" value="Ppantetheine-prot_Trfase_dom"/>
</dbReference>
<dbReference type="NCBIfam" id="TIGR00516">
    <property type="entry name" value="acpS"/>
    <property type="match status" value="1"/>
</dbReference>
<dbReference type="NCBIfam" id="TIGR00556">
    <property type="entry name" value="pantethn_trn"/>
    <property type="match status" value="1"/>
</dbReference>
<dbReference type="Pfam" id="PF01648">
    <property type="entry name" value="ACPS"/>
    <property type="match status" value="1"/>
</dbReference>
<dbReference type="SUPFAM" id="SSF56214">
    <property type="entry name" value="4'-phosphopantetheinyl transferase"/>
    <property type="match status" value="1"/>
</dbReference>
<keyword id="KW-0963">Cytoplasm</keyword>
<keyword id="KW-0275">Fatty acid biosynthesis</keyword>
<keyword id="KW-0276">Fatty acid metabolism</keyword>
<keyword id="KW-0444">Lipid biosynthesis</keyword>
<keyword id="KW-0443">Lipid metabolism</keyword>
<keyword id="KW-0460">Magnesium</keyword>
<keyword id="KW-0479">Metal-binding</keyword>
<keyword id="KW-1185">Reference proteome</keyword>
<keyword id="KW-0808">Transferase</keyword>
<accession>B2A4X6</accession>
<evidence type="ECO:0000255" key="1">
    <source>
        <dbReference type="HAMAP-Rule" id="MF_00101"/>
    </source>
</evidence>
<proteinExistence type="inferred from homology"/>
<reference key="1">
    <citation type="submission" date="2008-04" db="EMBL/GenBank/DDBJ databases">
        <title>Complete sequence of chromosome of Natranaerobius thermophilus JW/NM-WN-LF.</title>
        <authorList>
            <consortium name="US DOE Joint Genome Institute"/>
            <person name="Copeland A."/>
            <person name="Lucas S."/>
            <person name="Lapidus A."/>
            <person name="Glavina del Rio T."/>
            <person name="Dalin E."/>
            <person name="Tice H."/>
            <person name="Bruce D."/>
            <person name="Goodwin L."/>
            <person name="Pitluck S."/>
            <person name="Chertkov O."/>
            <person name="Brettin T."/>
            <person name="Detter J.C."/>
            <person name="Han C."/>
            <person name="Kuske C.R."/>
            <person name="Schmutz J."/>
            <person name="Larimer F."/>
            <person name="Land M."/>
            <person name="Hauser L."/>
            <person name="Kyrpides N."/>
            <person name="Lykidis A."/>
            <person name="Mesbah N.M."/>
            <person name="Wiegel J."/>
        </authorList>
    </citation>
    <scope>NUCLEOTIDE SEQUENCE [LARGE SCALE GENOMIC DNA]</scope>
    <source>
        <strain>ATCC BAA-1301 / DSM 18059 / JW/NM-WN-LF</strain>
    </source>
</reference>
<organism>
    <name type="scientific">Natranaerobius thermophilus (strain ATCC BAA-1301 / DSM 18059 / JW/NM-WN-LF)</name>
    <dbReference type="NCBI Taxonomy" id="457570"/>
    <lineage>
        <taxon>Bacteria</taxon>
        <taxon>Bacillati</taxon>
        <taxon>Bacillota</taxon>
        <taxon>Clostridia</taxon>
        <taxon>Natranaerobiales</taxon>
        <taxon>Natranaerobiaceae</taxon>
        <taxon>Natranaerobius</taxon>
    </lineage>
</organism>
<name>ACPS_NATTJ</name>
<sequence length="125" mass="13976">MIIGLGVDIIEIARIKKVYNKFPWKFVNKLFSDREQKKLMTLHNPNEYISGRFAAKEAVAKAFGTGIGQVRWKDIEILTADEGYPVVNLHGEALNKAEELGVTKVYLSISHSKTSAVANAILWSD</sequence>
<gene>
    <name evidence="1" type="primary">acpS</name>
    <name type="ordered locus">Nther_0300</name>
</gene>
<protein>
    <recommendedName>
        <fullName evidence="1">Holo-[acyl-carrier-protein] synthase</fullName>
        <shortName evidence="1">Holo-ACP synthase</shortName>
        <ecNumber evidence="1">2.7.8.7</ecNumber>
    </recommendedName>
    <alternativeName>
        <fullName evidence="1">4'-phosphopantetheinyl transferase AcpS</fullName>
    </alternativeName>
</protein>